<comment type="function">
    <text evidence="1">Required for rescue of stalled ribosomes mediated by trans-translation. Binds to transfer-messenger RNA (tmRNA), required for stable association of tmRNA with ribosomes. tmRNA and SmpB together mimic tRNA shape, replacing the anticodon stem-loop with SmpB. tmRNA is encoded by the ssrA gene; the 2 termini fold to resemble tRNA(Ala) and it encodes a 'tag peptide', a short internal open reading frame. During trans-translation Ala-aminoacylated tmRNA acts like a tRNA, entering the A-site of stalled ribosomes, displacing the stalled mRNA. The ribosome then switches to translate the ORF on the tmRNA; the nascent peptide is terminated with the 'tag peptide' encoded by the tmRNA and targeted for degradation. The ribosome is freed to recommence translation, which seems to be the essential function of trans-translation.</text>
</comment>
<comment type="subcellular location">
    <subcellularLocation>
        <location evidence="1">Cytoplasm</location>
    </subcellularLocation>
    <text evidence="1">The tmRNA-SmpB complex associates with stalled 70S ribosomes.</text>
</comment>
<comment type="similarity">
    <text evidence="1">Belongs to the SmpB family.</text>
</comment>
<keyword id="KW-0963">Cytoplasm</keyword>
<keyword id="KW-0694">RNA-binding</keyword>
<organism>
    <name type="scientific">Mycolicibacterium vanbaalenii (strain DSM 7251 / JCM 13017 / BCRC 16820 / KCTC 9966 / NRRL B-24157 / PYR-1)</name>
    <name type="common">Mycobacterium vanbaalenii</name>
    <dbReference type="NCBI Taxonomy" id="350058"/>
    <lineage>
        <taxon>Bacteria</taxon>
        <taxon>Bacillati</taxon>
        <taxon>Actinomycetota</taxon>
        <taxon>Actinomycetes</taxon>
        <taxon>Mycobacteriales</taxon>
        <taxon>Mycobacteriaceae</taxon>
        <taxon>Mycolicibacterium</taxon>
    </lineage>
</organism>
<sequence length="165" mass="18735">MAKKPKAVKDSNNQVVATNRKARHNYSILDTYEAGIALMGTEVKSLREGQASLADAFATVDDGEIWLRNLHIPEYHHGTWTNHAPRRNRKLLMHRREIDNLVGKIRDGNLTLVPLSLYFTGGKVKVELALARGKQAHDKRQDMARRDAQREVTRELGRRVKGMTS</sequence>
<protein>
    <recommendedName>
        <fullName evidence="1">SsrA-binding protein</fullName>
    </recommendedName>
    <alternativeName>
        <fullName evidence="1">Small protein B</fullName>
    </alternativeName>
</protein>
<feature type="chain" id="PRO_1000074358" description="SsrA-binding protein">
    <location>
        <begin position="1"/>
        <end position="165"/>
    </location>
</feature>
<feature type="region of interest" description="Disordered" evidence="2">
    <location>
        <begin position="135"/>
        <end position="165"/>
    </location>
</feature>
<feature type="compositionally biased region" description="Basic and acidic residues" evidence="2">
    <location>
        <begin position="135"/>
        <end position="158"/>
    </location>
</feature>
<dbReference type="EMBL" id="CP000511">
    <property type="protein sequence ID" value="ABM12736.1"/>
    <property type="molecule type" value="Genomic_DNA"/>
</dbReference>
<dbReference type="RefSeq" id="WP_011779154.1">
    <property type="nucleotide sequence ID" value="NZ_JACKSD010000251.1"/>
</dbReference>
<dbReference type="SMR" id="A1T6D6"/>
<dbReference type="STRING" id="350058.Mvan_1916"/>
<dbReference type="KEGG" id="mva:Mvan_1916"/>
<dbReference type="eggNOG" id="COG0691">
    <property type="taxonomic scope" value="Bacteria"/>
</dbReference>
<dbReference type="HOGENOM" id="CLU_108953_0_0_11"/>
<dbReference type="Proteomes" id="UP000009159">
    <property type="component" value="Chromosome"/>
</dbReference>
<dbReference type="GO" id="GO:0005829">
    <property type="term" value="C:cytosol"/>
    <property type="evidence" value="ECO:0007669"/>
    <property type="project" value="TreeGrafter"/>
</dbReference>
<dbReference type="GO" id="GO:0003723">
    <property type="term" value="F:RNA binding"/>
    <property type="evidence" value="ECO:0007669"/>
    <property type="project" value="UniProtKB-UniRule"/>
</dbReference>
<dbReference type="GO" id="GO:0070929">
    <property type="term" value="P:trans-translation"/>
    <property type="evidence" value="ECO:0007669"/>
    <property type="project" value="UniProtKB-UniRule"/>
</dbReference>
<dbReference type="CDD" id="cd09294">
    <property type="entry name" value="SmpB"/>
    <property type="match status" value="1"/>
</dbReference>
<dbReference type="Gene3D" id="2.40.280.10">
    <property type="match status" value="1"/>
</dbReference>
<dbReference type="HAMAP" id="MF_00023">
    <property type="entry name" value="SmpB"/>
    <property type="match status" value="1"/>
</dbReference>
<dbReference type="InterPro" id="IPR023620">
    <property type="entry name" value="SmpB"/>
</dbReference>
<dbReference type="InterPro" id="IPR000037">
    <property type="entry name" value="SsrA-bd_prot"/>
</dbReference>
<dbReference type="InterPro" id="IPR020081">
    <property type="entry name" value="SsrA-bd_prot_CS"/>
</dbReference>
<dbReference type="NCBIfam" id="NF003843">
    <property type="entry name" value="PRK05422.1"/>
    <property type="match status" value="1"/>
</dbReference>
<dbReference type="NCBIfam" id="TIGR00086">
    <property type="entry name" value="smpB"/>
    <property type="match status" value="1"/>
</dbReference>
<dbReference type="PANTHER" id="PTHR30308:SF2">
    <property type="entry name" value="SSRA-BINDING PROTEIN"/>
    <property type="match status" value="1"/>
</dbReference>
<dbReference type="PANTHER" id="PTHR30308">
    <property type="entry name" value="TMRNA-BINDING COMPONENT OF TRANS-TRANSLATION TAGGING COMPLEX"/>
    <property type="match status" value="1"/>
</dbReference>
<dbReference type="Pfam" id="PF01668">
    <property type="entry name" value="SmpB"/>
    <property type="match status" value="1"/>
</dbReference>
<dbReference type="SUPFAM" id="SSF74982">
    <property type="entry name" value="Small protein B (SmpB)"/>
    <property type="match status" value="1"/>
</dbReference>
<dbReference type="PROSITE" id="PS01317">
    <property type="entry name" value="SSRP"/>
    <property type="match status" value="1"/>
</dbReference>
<accession>A1T6D6</accession>
<gene>
    <name evidence="1" type="primary">smpB</name>
    <name type="ordered locus">Mvan_1916</name>
</gene>
<reference key="1">
    <citation type="submission" date="2006-12" db="EMBL/GenBank/DDBJ databases">
        <title>Complete sequence of Mycobacterium vanbaalenii PYR-1.</title>
        <authorList>
            <consortium name="US DOE Joint Genome Institute"/>
            <person name="Copeland A."/>
            <person name="Lucas S."/>
            <person name="Lapidus A."/>
            <person name="Barry K."/>
            <person name="Detter J.C."/>
            <person name="Glavina del Rio T."/>
            <person name="Hammon N."/>
            <person name="Israni S."/>
            <person name="Dalin E."/>
            <person name="Tice H."/>
            <person name="Pitluck S."/>
            <person name="Singan V."/>
            <person name="Schmutz J."/>
            <person name="Larimer F."/>
            <person name="Land M."/>
            <person name="Hauser L."/>
            <person name="Kyrpides N."/>
            <person name="Anderson I.J."/>
            <person name="Miller C."/>
            <person name="Richardson P."/>
        </authorList>
    </citation>
    <scope>NUCLEOTIDE SEQUENCE [LARGE SCALE GENOMIC DNA]</scope>
    <source>
        <strain>DSM 7251 / JCM 13017 / BCRC 16820 / KCTC 9966 / NRRL B-24157 / PYR-1</strain>
    </source>
</reference>
<evidence type="ECO:0000255" key="1">
    <source>
        <dbReference type="HAMAP-Rule" id="MF_00023"/>
    </source>
</evidence>
<evidence type="ECO:0000256" key="2">
    <source>
        <dbReference type="SAM" id="MobiDB-lite"/>
    </source>
</evidence>
<name>SSRP_MYCVP</name>
<proteinExistence type="inferred from homology"/>